<accession>P57744</accession>
<accession>D6VWV4</accession>
<proteinExistence type="evidence at protein level"/>
<sequence length="87" mass="9764">MSSLSTSDLASLDDTSKKEIATFLEGENSKQKVQMSIHQFTNICFKKCVESVNDSNLSSQEEQCLSNCVNRFLDTNIRIVNGLQNTR</sequence>
<reference key="1">
    <citation type="journal article" date="1996" name="EMBO J.">
        <title>Complete nucleotide sequence of Saccharomyces cerevisiae chromosome X.</title>
        <authorList>
            <person name="Galibert F."/>
            <person name="Alexandraki D."/>
            <person name="Baur A."/>
            <person name="Boles E."/>
            <person name="Chalwatzis N."/>
            <person name="Chuat J.-C."/>
            <person name="Coster F."/>
            <person name="Cziepluch C."/>
            <person name="de Haan M."/>
            <person name="Domdey H."/>
            <person name="Durand P."/>
            <person name="Entian K.-D."/>
            <person name="Gatius M."/>
            <person name="Goffeau A."/>
            <person name="Grivell L.A."/>
            <person name="Hennemann A."/>
            <person name="Herbert C.J."/>
            <person name="Heumann K."/>
            <person name="Hilger F."/>
            <person name="Hollenberg C.P."/>
            <person name="Huang M.-E."/>
            <person name="Jacq C."/>
            <person name="Jauniaux J.-C."/>
            <person name="Katsoulou C."/>
            <person name="Kirchrath L."/>
            <person name="Kleine K."/>
            <person name="Kordes E."/>
            <person name="Koetter P."/>
            <person name="Liebl S."/>
            <person name="Louis E.J."/>
            <person name="Manus V."/>
            <person name="Mewes H.-W."/>
            <person name="Miosga T."/>
            <person name="Obermaier B."/>
            <person name="Perea J."/>
            <person name="Pohl T.M."/>
            <person name="Portetelle D."/>
            <person name="Pujol A."/>
            <person name="Purnelle B."/>
            <person name="Ramezani Rad M."/>
            <person name="Rasmussen S.W."/>
            <person name="Rose M."/>
            <person name="Rossau R."/>
            <person name="Schaaff-Gerstenschlaeger I."/>
            <person name="Smits P.H.M."/>
            <person name="Scarcez T."/>
            <person name="Soriano N."/>
            <person name="To Van D."/>
            <person name="Tzermia M."/>
            <person name="Van Broekhoven A."/>
            <person name="Vandenbol M."/>
            <person name="Wedler H."/>
            <person name="von Wettstein D."/>
            <person name="Wambutt R."/>
            <person name="Zagulski M."/>
            <person name="Zollner A."/>
            <person name="Karpfinger-Hartl L."/>
        </authorList>
    </citation>
    <scope>NUCLEOTIDE SEQUENCE [LARGE SCALE GENOMIC DNA]</scope>
    <source>
        <strain>ATCC 204508 / S288c</strain>
    </source>
</reference>
<reference key="2">
    <citation type="journal article" date="2014" name="G3 (Bethesda)">
        <title>The reference genome sequence of Saccharomyces cerevisiae: Then and now.</title>
        <authorList>
            <person name="Engel S.R."/>
            <person name="Dietrich F.S."/>
            <person name="Fisk D.G."/>
            <person name="Binkley G."/>
            <person name="Balakrishnan R."/>
            <person name="Costanzo M.C."/>
            <person name="Dwight S.S."/>
            <person name="Hitz B.C."/>
            <person name="Karra K."/>
            <person name="Nash R.S."/>
            <person name="Weng S."/>
            <person name="Wong E.D."/>
            <person name="Lloyd P."/>
            <person name="Skrzypek M.S."/>
            <person name="Miyasato S.R."/>
            <person name="Simison M."/>
            <person name="Cherry J.M."/>
        </authorList>
    </citation>
    <scope>GENOME REANNOTATION</scope>
    <source>
        <strain>ATCC 204508 / S288c</strain>
    </source>
</reference>
<reference key="3">
    <citation type="journal article" date="2007" name="Genome Res.">
        <title>Approaching a complete repository of sequence-verified protein-encoding clones for Saccharomyces cerevisiae.</title>
        <authorList>
            <person name="Hu Y."/>
            <person name="Rolfs A."/>
            <person name="Bhullar B."/>
            <person name="Murthy T.V.S."/>
            <person name="Zhu C."/>
            <person name="Berger M.F."/>
            <person name="Camargo A.A."/>
            <person name="Kelley F."/>
            <person name="McCarron S."/>
            <person name="Jepson D."/>
            <person name="Richardson A."/>
            <person name="Raphael J."/>
            <person name="Moreira D."/>
            <person name="Taycher E."/>
            <person name="Zuo D."/>
            <person name="Mohr S."/>
            <person name="Kane M.F."/>
            <person name="Williamson J."/>
            <person name="Simpson A.J.G."/>
            <person name="Bulyk M.L."/>
            <person name="Harlow E."/>
            <person name="Marsischky G."/>
            <person name="Kolodner R.D."/>
            <person name="LaBaer J."/>
        </authorList>
    </citation>
    <scope>NUCLEOTIDE SEQUENCE [GENOMIC DNA]</scope>
    <source>
        <strain>ATCC 204508 / S288c</strain>
    </source>
</reference>
<reference key="4">
    <citation type="journal article" date="1999" name="EMBO J.">
        <title>Different import pathways through the mitochondrial intermembrane space for inner membrane proteins.</title>
        <authorList>
            <person name="Leuenberger D."/>
            <person name="Bally N.A."/>
            <person name="Schatz G."/>
            <person name="Koehler C.M."/>
        </authorList>
    </citation>
    <scope>FUNCTION</scope>
    <scope>SUBCELLULAR LOCATION</scope>
    <scope>INTERACTION WITH THE TIM22 COMPLEX</scope>
</reference>
<reference key="5">
    <citation type="journal article" date="1999" name="Mol. Biol. Cell">
        <title>Biogenesis of Tim proteins of the mitochondrial carrier import pathway: differential targeting mechanisms and crossing over with the main import pathway.</title>
        <authorList>
            <person name="Kurz M."/>
            <person name="Martin H."/>
            <person name="Rassow J."/>
            <person name="Pfanner N."/>
            <person name="Ryan M.T."/>
        </authorList>
    </citation>
    <scope>SUBCELLULAR LOCATION</scope>
</reference>
<reference key="6">
    <citation type="journal article" date="2000" name="EMBO J.">
        <title>The role of the TIM8-13 complex in the import of Tim23 into mitochondria.</title>
        <authorList>
            <person name="Paschen S.A."/>
            <person name="Rothbauer U."/>
            <person name="Kaldi K."/>
            <person name="Bauer M.F."/>
            <person name="Neupert W."/>
            <person name="Brunner M."/>
        </authorList>
    </citation>
    <scope>FUNCTION</scope>
</reference>
<reference key="7">
    <citation type="journal article" date="2000" name="J. Cell Biol.">
        <title>Two intermembrane space TIM complexes interact with different domains of Tim23p during its import into mitochondria.</title>
        <authorList>
            <person name="Davis A.J."/>
            <person name="Sepuri N.B."/>
            <person name="Holder J."/>
            <person name="Johnson A.E."/>
            <person name="Jensen R.E."/>
        </authorList>
    </citation>
    <scope>FUNCTION</scope>
</reference>
<reference key="8">
    <citation type="journal article" date="2001" name="Mol. Cell. Biol.">
        <title>The essential function of the small Tim proteins in the TIM22 import pathway does not depend on formation of the soluble 70-kilodalton complex.</title>
        <authorList>
            <person name="Murphy M.P."/>
            <person name="Leuenberger D."/>
            <person name="Curran S.P."/>
            <person name="Oppliger W."/>
            <person name="Koehler C.M."/>
        </authorList>
    </citation>
    <scope>FUNCTION</scope>
</reference>
<reference key="9">
    <citation type="journal article" date="2002" name="J. Cell Biol.">
        <title>The role of the Tim8p-Tim13p complex in a conserved import pathway for mitochondrial polytopic inner membrane proteins.</title>
        <authorList>
            <person name="Curran S.P."/>
            <person name="Leuenberger D."/>
            <person name="Schmidt E."/>
            <person name="Koehler C.M."/>
        </authorList>
    </citation>
    <scope>FUNCTION</scope>
    <scope>SUBUNIT</scope>
    <scope>PROBABLE DISULFIDE BONDS</scope>
    <scope>LACK OF ZINC-BINDING WHEN PRESENT IN THE MITOCHONDRIAL INTERMEMBRANE SPACE</scope>
</reference>
<reference key="10">
    <citation type="journal article" date="2006" name="J. Proteome Res.">
        <title>Toward the complete yeast mitochondrial proteome: multidimensional separation techniques for mitochondrial proteomics.</title>
        <authorList>
            <person name="Reinders J."/>
            <person name="Zahedi R.P."/>
            <person name="Pfanner N."/>
            <person name="Meisinger C."/>
            <person name="Sickmann A."/>
        </authorList>
    </citation>
    <scope>SUBCELLULAR LOCATION [LARGE SCALE ANALYSIS]</scope>
    <scope>IDENTIFICATION BY MASS SPECTROMETRY</scope>
</reference>
<reference key="11">
    <citation type="journal article" date="2012" name="Mol. Cell. Proteomics">
        <title>Intermembrane space proteome of yeast mitochondria.</title>
        <authorList>
            <person name="Voegtle F.N."/>
            <person name="Burkhart J.M."/>
            <person name="Rao S."/>
            <person name="Gerbeth C."/>
            <person name="Hinrichs J."/>
            <person name="Martinou J.C."/>
            <person name="Chacinska A."/>
            <person name="Sickmann A."/>
            <person name="Zahedi R.P."/>
            <person name="Meisinger C."/>
        </authorList>
    </citation>
    <scope>IDENTIFICATION BY MASS SPECTROMETRY</scope>
    <scope>SUBCELLULAR LOCATION [LARGE SCALE ANALYSIS]</scope>
</reference>
<feature type="chain" id="PRO_0000193594" description="Mitochondrial import inner membrane translocase subunit TIM8">
    <location>
        <begin position="1"/>
        <end position="87"/>
    </location>
</feature>
<feature type="short sequence motif" description="Twin CX3C motif">
    <location>
        <begin position="44"/>
        <end position="68"/>
    </location>
</feature>
<feature type="disulfide bond" evidence="1">
    <location>
        <begin position="44"/>
        <end position="68"/>
    </location>
</feature>
<feature type="disulfide bond" evidence="1">
    <location>
        <begin position="48"/>
        <end position="64"/>
    </location>
</feature>
<feature type="helix" evidence="11">
    <location>
        <begin position="30"/>
        <end position="48"/>
    </location>
</feature>
<feature type="strand" evidence="11">
    <location>
        <begin position="53"/>
        <end position="56"/>
    </location>
</feature>
<feature type="helix" evidence="11">
    <location>
        <begin position="59"/>
        <end position="85"/>
    </location>
</feature>
<keyword id="KW-0002">3D-structure</keyword>
<keyword id="KW-0143">Chaperone</keyword>
<keyword id="KW-1015">Disulfide bond</keyword>
<keyword id="KW-0472">Membrane</keyword>
<keyword id="KW-0479">Metal-binding</keyword>
<keyword id="KW-0496">Mitochondrion</keyword>
<keyword id="KW-0999">Mitochondrion inner membrane</keyword>
<keyword id="KW-0653">Protein transport</keyword>
<keyword id="KW-1185">Reference proteome</keyword>
<keyword id="KW-0811">Translocation</keyword>
<keyword id="KW-0813">Transport</keyword>
<keyword id="KW-0862">Zinc</keyword>
<name>TIM8_YEAST</name>
<comment type="function">
    <text evidence="3 4 5 6 7">Mitochondrial intermembrane chaperone that participates in the import and insertion of some multi-pass transmembrane proteins into the mitochondrial inner membrane. Also required for the transfer of beta-barrel precursors from the TOM complex to the sorting and assembly machinery (SAM complex) of the outer membrane. Acts as a chaperone-like protein that protects the hydrophobic precursors from aggregation and guide them through the mitochondrial intermembrane space. The TIM8-TIM13 complex is non essential and only mediates the import of few proteins under precise conditions, while the predominant TIM9-TIM10 70 kDa complex is crucial and mediates the import of much more proteins. Strictly required for import of TIM23 in some conditions, when a low membrane potential exists in the mitochondria.</text>
</comment>
<comment type="subunit">
    <text evidence="3 7">Heterohexamer; composed of 3 copies of TIM8 and 3 copies of TIM13, named soluble 70 kDa complex. Associates with the TIM22 complex, whose core is composed of TIM18, TIM22 and TIM54. Interacts with the transmembrane regions of multi-pass transmembrane proteins in transit.</text>
</comment>
<comment type="interaction">
    <interactant intactId="EBI-9013892">
        <id>P57744</id>
    </interactant>
    <interactant intactId="EBI-9121">
        <id>P53299</id>
        <label>TIM13</label>
    </interactant>
    <organismsDiffer>false</organismsDiffer>
    <experiments>4</experiments>
</comment>
<comment type="subcellular location">
    <subcellularLocation>
        <location evidence="2 3 8">Mitochondrion inner membrane</location>
        <topology evidence="2 3 8">Peripheral membrane protein</topology>
        <orientation evidence="2 3">Intermembrane side</orientation>
    </subcellularLocation>
    <subcellularLocation>
        <location evidence="9">Mitochondrion intermembrane space</location>
    </subcellularLocation>
    <text>Import into inner membrane protein requires TIM5 function.</text>
</comment>
<comment type="domain">
    <text evidence="10">The twin CX3C motif contains 4 conserved Cys residues that form 2 disulfide bonds in the mitochondrial intermembrane space. However, during the transit of TIM8 from cytoplasm into mitochondrion, the Cys residues probably coordinate zinc, thereby preventing folding and allowing its transfer across mitochondrial outer membrane (Probable).</text>
</comment>
<comment type="similarity">
    <text evidence="10">Belongs to the small Tim family.</text>
</comment>
<dbReference type="EMBL" id="Z49636">
    <property type="status" value="NOT_ANNOTATED_CDS"/>
    <property type="molecule type" value="Genomic_DNA"/>
</dbReference>
<dbReference type="EMBL" id="AY558258">
    <property type="protein sequence ID" value="AAS56584.1"/>
    <property type="molecule type" value="Genomic_DNA"/>
</dbReference>
<dbReference type="EMBL" id="BK006943">
    <property type="protein sequence ID" value="DAA08920.1"/>
    <property type="molecule type" value="Genomic_DNA"/>
</dbReference>
<dbReference type="PIR" id="S78075">
    <property type="entry name" value="S78075"/>
</dbReference>
<dbReference type="RefSeq" id="NP_058168.1">
    <property type="nucleotide sequence ID" value="NM_001184382.1"/>
</dbReference>
<dbReference type="PDB" id="3CJH">
    <property type="method" value="X-ray"/>
    <property type="resolution" value="2.60 A"/>
    <property type="chains" value="B/D/F/H/J/L=24-87"/>
</dbReference>
<dbReference type="PDBsum" id="3CJH"/>
<dbReference type="SASBDB" id="P57744"/>
<dbReference type="SMR" id="P57744"/>
<dbReference type="BioGRID" id="33891">
    <property type="interactions" value="92"/>
</dbReference>
<dbReference type="ComplexPortal" id="CPX-2371">
    <property type="entry name" value="TIM8-TIM13 mitochondrial intermembrane space protein transporter complex"/>
</dbReference>
<dbReference type="DIP" id="DIP-8051N"/>
<dbReference type="FunCoup" id="P57744">
    <property type="interactions" value="667"/>
</dbReference>
<dbReference type="IntAct" id="P57744">
    <property type="interactions" value="1"/>
</dbReference>
<dbReference type="STRING" id="4932.YJR135W-A"/>
<dbReference type="TCDB" id="3.A.8.1.1">
    <property type="family name" value="the mitochondrial protein translocase (mpt) family"/>
</dbReference>
<dbReference type="iPTMnet" id="P57744"/>
<dbReference type="PaxDb" id="4932-YJR135W-A"/>
<dbReference type="PeptideAtlas" id="P57744"/>
<dbReference type="EnsemblFungi" id="YJR135W-A_mRNA">
    <property type="protein sequence ID" value="YJR135W-A"/>
    <property type="gene ID" value="YJR135W-A"/>
</dbReference>
<dbReference type="GeneID" id="853600"/>
<dbReference type="KEGG" id="sce:YJR135W-A"/>
<dbReference type="AGR" id="SGD:S000007348"/>
<dbReference type="SGD" id="S000007348">
    <property type="gene designation" value="TIM8"/>
</dbReference>
<dbReference type="VEuPathDB" id="FungiDB:YJR135W-A"/>
<dbReference type="eggNOG" id="KOG3489">
    <property type="taxonomic scope" value="Eukaryota"/>
</dbReference>
<dbReference type="HOGENOM" id="CLU_141397_1_0_1"/>
<dbReference type="InParanoid" id="P57744"/>
<dbReference type="OMA" id="NEICWDK"/>
<dbReference type="OrthoDB" id="344165at2759"/>
<dbReference type="BioCyc" id="YEAST:G3O-31800-MONOMER"/>
<dbReference type="BioGRID-ORCS" id="853600">
    <property type="hits" value="4 hits in 10 CRISPR screens"/>
</dbReference>
<dbReference type="EvolutionaryTrace" id="P57744"/>
<dbReference type="PRO" id="PR:P57744"/>
<dbReference type="Proteomes" id="UP000002311">
    <property type="component" value="Chromosome X"/>
</dbReference>
<dbReference type="RNAct" id="P57744">
    <property type="molecule type" value="protein"/>
</dbReference>
<dbReference type="GO" id="GO:0005743">
    <property type="term" value="C:mitochondrial inner membrane"/>
    <property type="evidence" value="ECO:0007669"/>
    <property type="project" value="UniProtKB-SubCell"/>
</dbReference>
<dbReference type="GO" id="GO:0005758">
    <property type="term" value="C:mitochondrial intermembrane space"/>
    <property type="evidence" value="ECO:0000304"/>
    <property type="project" value="Reactome"/>
</dbReference>
<dbReference type="GO" id="GO:0042719">
    <property type="term" value="C:mitochondrial intermembrane space protein transporter complex"/>
    <property type="evidence" value="ECO:0000314"/>
    <property type="project" value="SGD"/>
</dbReference>
<dbReference type="GO" id="GO:0005739">
    <property type="term" value="C:mitochondrion"/>
    <property type="evidence" value="ECO:0000314"/>
    <property type="project" value="ComplexPortal"/>
</dbReference>
<dbReference type="GO" id="GO:0046872">
    <property type="term" value="F:metal ion binding"/>
    <property type="evidence" value="ECO:0007669"/>
    <property type="project" value="UniProtKB-KW"/>
</dbReference>
<dbReference type="GO" id="GO:0140318">
    <property type="term" value="F:protein transporter activity"/>
    <property type="evidence" value="ECO:0000314"/>
    <property type="project" value="SGD"/>
</dbReference>
<dbReference type="GO" id="GO:0045039">
    <property type="term" value="P:protein insertion into mitochondrial inner membrane"/>
    <property type="evidence" value="ECO:0000314"/>
    <property type="project" value="SGD"/>
</dbReference>
<dbReference type="Gene3D" id="1.10.287.810">
    <property type="entry name" value="Mitochondrial import inner membrane translocase subunit tim13 like domains"/>
    <property type="match status" value="1"/>
</dbReference>
<dbReference type="InterPro" id="IPR004217">
    <property type="entry name" value="Tim10-like"/>
</dbReference>
<dbReference type="InterPro" id="IPR035427">
    <property type="entry name" value="Tim10-like_dom_sf"/>
</dbReference>
<dbReference type="Pfam" id="PF02953">
    <property type="entry name" value="zf-Tim10_DDP"/>
    <property type="match status" value="1"/>
</dbReference>
<dbReference type="SUPFAM" id="SSF144122">
    <property type="entry name" value="Tim10-like"/>
    <property type="match status" value="1"/>
</dbReference>
<protein>
    <recommendedName>
        <fullName>Mitochondrial import inner membrane translocase subunit TIM8</fullName>
    </recommendedName>
</protein>
<organism>
    <name type="scientific">Saccharomyces cerevisiae (strain ATCC 204508 / S288c)</name>
    <name type="common">Baker's yeast</name>
    <dbReference type="NCBI Taxonomy" id="559292"/>
    <lineage>
        <taxon>Eukaryota</taxon>
        <taxon>Fungi</taxon>
        <taxon>Dikarya</taxon>
        <taxon>Ascomycota</taxon>
        <taxon>Saccharomycotina</taxon>
        <taxon>Saccharomycetes</taxon>
        <taxon>Saccharomycetales</taxon>
        <taxon>Saccharomycetaceae</taxon>
        <taxon>Saccharomyces</taxon>
    </lineage>
</organism>
<gene>
    <name type="primary">TIM8</name>
    <name type="ordered locus">YJR135W-A</name>
    <name type="ORF">YJR135BW</name>
</gene>
<evidence type="ECO:0000250" key="1"/>
<evidence type="ECO:0000269" key="2">
    <source>
    </source>
</evidence>
<evidence type="ECO:0000269" key="3">
    <source>
    </source>
</evidence>
<evidence type="ECO:0000269" key="4">
    <source>
    </source>
</evidence>
<evidence type="ECO:0000269" key="5">
    <source>
    </source>
</evidence>
<evidence type="ECO:0000269" key="6">
    <source>
    </source>
</evidence>
<evidence type="ECO:0000269" key="7">
    <source>
    </source>
</evidence>
<evidence type="ECO:0000269" key="8">
    <source>
    </source>
</evidence>
<evidence type="ECO:0000269" key="9">
    <source>
    </source>
</evidence>
<evidence type="ECO:0000305" key="10"/>
<evidence type="ECO:0007829" key="11">
    <source>
        <dbReference type="PDB" id="3CJH"/>
    </source>
</evidence>